<accession>P03519</accession>
<reference key="1">
    <citation type="journal article" date="1981" name="J. Virol.">
        <title>Nucleotide sequences of the mRNA's encoding the vesicular stomatitis virus G and M proteins determined from cDNA clones containing the complete coding regions.</title>
        <authorList>
            <person name="Rose J.K."/>
            <person name="Gallione C.J."/>
        </authorList>
    </citation>
    <scope>NUCLEOTIDE SEQUENCE [GENOMIC RNA]</scope>
</reference>
<reference key="2">
    <citation type="journal article" date="1991" name="J. Virol.">
        <title>Intracellular distribution of input vesicular stomatitis virus proteins after uncoating.</title>
        <authorList>
            <person name="Rigaut K.D."/>
            <person name="Birk D.E."/>
            <person name="Lenard J."/>
        </authorList>
    </citation>
    <scope>SUBCELLULAR LOCATION</scope>
</reference>
<reference key="3">
    <citation type="journal article" date="1992" name="J. Virol.">
        <title>Sites of in vivo phosphorylation of vesicular stomatitis virus matrix protein.</title>
        <authorList>
            <person name="Kaptur P.E."/>
            <person name="McCreedy B.J. Jr."/>
            <person name="Lyles D.S."/>
        </authorList>
    </citation>
    <scope>PHOSPHORYLATION</scope>
    <source>
        <strain>Orsay</strain>
    </source>
</reference>
<reference key="4">
    <citation type="journal article" date="1998" name="J. Virol.">
        <title>Effect of vesicular stomatitis virus matrix protein on transcription directed by host RNA polymerases I, II, and III.</title>
        <authorList>
            <person name="Ahmed M."/>
            <person name="Lyles D.S."/>
        </authorList>
    </citation>
    <scope>MUTAGENESIS OF MET-51</scope>
</reference>
<reference key="5">
    <citation type="journal article" date="2000" name="Mol. Cell">
        <title>Vesicular stomatitis virus matrix protein inhibits host cell gene expression by targeting the nucleoporin Nup98.</title>
        <authorList>
            <person name="von Kobbe C."/>
            <person name="van Deursen J.M."/>
            <person name="Rodrigues J.P."/>
            <person name="Sitterlin D."/>
            <person name="Bachi A."/>
            <person name="Wu X."/>
            <person name="Wilm M."/>
            <person name="Carmo-Fonseca M."/>
            <person name="Izaurralde E."/>
        </authorList>
    </citation>
    <scope>INTERACTION WITH HOST NUP98</scope>
    <scope>MUTAGENESIS OF 5-LYS--ILE-7; 28-GLU--ASP-30; 42-ASP--SER-44; 52-ASP--TYR-54 AND 61-TYR--LYS-63</scope>
</reference>
<reference key="6">
    <citation type="journal article" date="2002" name="J. Virol.">
        <title>Identification of two additional translation products from the matrix (M) gene that contribute to vesicular stomatitis virus cytopathology.</title>
        <authorList>
            <person name="Jayakar H.R."/>
            <person name="Whitt M.A."/>
        </authorList>
    </citation>
    <scope>ALTERNATIVE INITIATION (ISOFORMS M2 AND M3)</scope>
</reference>
<reference key="7">
    <citation type="journal article" date="2005" name="J. Gen. Virol.">
        <title>Membrane deformations induced by the matrix protein of vesicular stomatitis virus in a minimal system.</title>
        <authorList>
            <person name="Solon J."/>
            <person name="Gareil O."/>
            <person name="Bassereau P."/>
            <person name="Gaudin Y."/>
        </authorList>
    </citation>
    <scope>FUNCTION</scope>
</reference>
<reference key="8">
    <citation type="journal article" date="2005" name="Mol. Cell">
        <title>VSV disrupts the Rae1/mrnp41 mRNA nuclear export pathway.</title>
        <authorList>
            <person name="Faria P.A."/>
            <person name="Chakraborty P."/>
            <person name="Levay A."/>
            <person name="Barber G.N."/>
            <person name="Ezelle H.J."/>
            <person name="Enninga J."/>
            <person name="Arana C."/>
            <person name="van Deursen J."/>
            <person name="Fontoura B.M."/>
        </authorList>
    </citation>
    <scope>FUNCTION</scope>
    <scope>INTERACTION WITH HOST RAE1-NUP98 COMPLEX</scope>
</reference>
<reference key="9">
    <citation type="journal article" date="2004" name="J. Virol.">
        <title>Functional analysis of late-budding domain activity associated with the PSAP motif within the vesicular stomatitis virus M protein.</title>
        <authorList>
            <person name="Irie T."/>
            <person name="Licata J.M."/>
            <person name="Jayakar H.R."/>
            <person name="Whitt M.A."/>
            <person name="Bell P."/>
            <person name="Harty R.N."/>
        </authorList>
    </citation>
    <scope>DOMAIN LATE-BUDDING</scope>
    <scope>FUNCTION</scope>
</reference>
<reference key="10">
    <citation type="journal article" date="2003" name="J. Virol.">
        <title>The cell-rounding activity of the vesicular stomatitis virus matrix protein is due to the induction of cell death.</title>
        <authorList>
            <person name="Kopecky S.A."/>
            <person name="Lyles D.S."/>
        </authorList>
    </citation>
    <scope>CYTOPATHICITY</scope>
</reference>
<reference key="11">
    <citation type="journal article" date="2005" name="J. Virol.">
        <title>L-domain flanking sequences are important for host interactions and efficient budding of vesicular stomatitis virus recombinants.</title>
        <authorList>
            <person name="Irie T."/>
            <person name="Harty R.N."/>
        </authorList>
    </citation>
    <scope>DOMAIN LATE-BUDDING</scope>
    <scope>FUNCTION</scope>
</reference>
<reference key="12">
    <citation type="journal article" date="2006" name="J. Virol.">
        <title>Role of residues 121 to 124 of vesicular stomatitis virus matrix protein in virus assembly and virus-host interaction.</title>
        <authorList>
            <person name="Connor J.H."/>
            <person name="McKenzie M.O."/>
            <person name="Lyles D.S."/>
        </authorList>
    </citation>
    <scope>MUTAGENESIS OF 121-ALA--ALA-124</scope>
</reference>
<reference key="13">
    <citation type="journal article" date="2010" name="J. Virol.">
        <title>The matrix protein of vesicular stomatitis virus binds dynamin for efficient viral assembly.</title>
        <authorList>
            <person name="Raux H."/>
            <person name="Obiang L."/>
            <person name="Richard N."/>
            <person name="Harper F."/>
            <person name="Blondel D."/>
            <person name="Gaudin Y."/>
        </authorList>
    </citation>
    <scope>INTERACTION WITH HOST DYNAMIN</scope>
</reference>
<reference key="14">
    <citation type="journal article" date="2012" name="J. Gen. Virol.">
        <title>Phenotypes of vesicular stomatitis virus mutants with mutations in the PSAP motif of the matrix protein.</title>
        <authorList>
            <person name="Obiang L."/>
            <person name="Raux H."/>
            <person name="Ouldali M."/>
            <person name="Blondel D."/>
            <person name="Gaudin Y."/>
        </authorList>
    </citation>
    <scope>INTERACTION WITH HOST NEDD4 AND TSG101</scope>
    <scope>MUTAGENESIS OF LEU-4; TYR-27 AND PRO-40</scope>
    <scope>FUNCTION</scope>
    <source>
        <strain>Indiana (Orsay)</strain>
    </source>
</reference>
<reference key="15">
    <citation type="journal article" date="2017" name="Vet. Microbiol.">
        <title>The matrix protein of vesicular stomatitis virus inhibits host-directed transcription of target genes via interaction with the TFIIH subunit p8.</title>
        <authorList>
            <person name="Pan W."/>
            <person name="Song D."/>
            <person name="He W."/>
            <person name="Lu H."/>
            <person name="Lan Y."/>
            <person name="Tong J."/>
            <person name="Gao F."/>
            <person name="Zhao K."/>
        </authorList>
    </citation>
    <scope>FUNCTION</scope>
    <scope>INTERACTION WITH HOST GTF2H5</scope>
    <scope>SUBCELLULAR LOCATION</scope>
    <scope>MUTAGENESIS OF MET-51; ILE-96; GLU-156; ARG-159 AND ARG-160</scope>
</reference>
<reference key="16">
    <citation type="journal article" date="2021" name="Virus Genes">
        <title>The host cellular protein Ndufaf4 interacts with the vesicular stomatitis virus M protein and affects viral propagation.</title>
        <authorList>
            <person name="Pan W."/>
            <person name="Shen Z."/>
            <person name="Wang H."/>
            <person name="He H."/>
        </authorList>
    </citation>
    <scope>INTERACTION WITH HOST NDUFAF4</scope>
    <scope>MUTAGENESIS OF 156-GLU-HIS-157; GLU-156 AND 180-ASP-GLU-181</scope>
</reference>
<reference key="17">
    <citation type="journal article" date="2021" name="MBio">
        <title>SARS-CoV-2 ORF6 Disrupts Bidirectional Nucleocytoplasmic Transport through Interactions with Rae1 and Nup98.</title>
        <authorList>
            <person name="Addetia A."/>
            <person name="Lieberman N.A.P."/>
            <person name="Phung Q."/>
            <person name="Hsiang T.Y."/>
            <person name="Xie H."/>
            <person name="Roychoudhury P."/>
            <person name="Shrestha L."/>
            <person name="Loprieno M.A."/>
            <person name="Huang M.L."/>
            <person name="Gale M. Jr."/>
            <person name="Jerome K.R."/>
            <person name="Greninger A.L."/>
        </authorList>
    </citation>
    <scope>VARIANT ALA-133</scope>
    <scope>FUNCTION</scope>
    <scope>INTERACTION WITH HUMAN RAE1-NUP98 COMPLEX</scope>
    <source>
        <strain>pVSV1(+)-GFP</strain>
    </source>
</reference>
<reference evidence="22 23" key="18">
    <citation type="journal article" date="2022" name="Nat. Commun.">
        <title>Visualizing molecular interactions that determine assembly of a bullet-shaped vesicular stomatitis virus particle.</title>
        <authorList>
            <person name="Jenni S."/>
            <person name="Horwitz J.A."/>
            <person name="Bloyet L.M."/>
            <person name="Whelan S.P.J."/>
            <person name="Harrison S.C."/>
        </authorList>
    </citation>
    <scope>STRUCTURE BY ELECTRON MICROSCOPY (3.50 ANGSTROMS)</scope>
    <scope>INTERACTION WITH THE MATRIX PROTEIN</scope>
    <scope>SUBUNIT</scope>
    <scope>FUNCTION</scope>
</reference>
<reference key="19">
    <citation type="journal article" date="2022" name="Proc. Natl. Acad. Sci. U.S.A.">
        <title>Locations and in situ structure of the polymerase complex inside the virion of vesicular stomatitis virus.</title>
        <authorList>
            <person name="Si Z."/>
            <person name="Zhou K."/>
            <person name="Tsao J."/>
            <person name="Luo M."/>
            <person name="Zhou Z.H."/>
        </authorList>
    </citation>
    <scope>STRUCTURE BY ELECTRON MICROSCOPY (15.0 ANGSTROMS) OF THE VIRION</scope>
    <scope>SUBCELLULAR LOCATION</scope>
    <scope>FUNCTION</scope>
    <scope>SUBUNIT</scope>
    <scope>INTERACTION WITH THE NUCLEOPROTEIN</scope>
</reference>
<evidence type="ECO:0000250" key="1">
    <source>
        <dbReference type="UniProtKB" id="P08325"/>
    </source>
</evidence>
<evidence type="ECO:0000256" key="2">
    <source>
        <dbReference type="SAM" id="MobiDB-lite"/>
    </source>
</evidence>
<evidence type="ECO:0000269" key="3">
    <source>
    </source>
</evidence>
<evidence type="ECO:0000269" key="4">
    <source>
    </source>
</evidence>
<evidence type="ECO:0000269" key="5">
    <source>
    </source>
</evidence>
<evidence type="ECO:0000269" key="6">
    <source>
    </source>
</evidence>
<evidence type="ECO:0000269" key="7">
    <source>
    </source>
</evidence>
<evidence type="ECO:0000269" key="8">
    <source>
    </source>
</evidence>
<evidence type="ECO:0000269" key="9">
    <source>
    </source>
</evidence>
<evidence type="ECO:0000269" key="10">
    <source>
    </source>
</evidence>
<evidence type="ECO:0000269" key="11">
    <source>
    </source>
</evidence>
<evidence type="ECO:0000269" key="12">
    <source>
    </source>
</evidence>
<evidence type="ECO:0000269" key="13">
    <source>
    </source>
</evidence>
<evidence type="ECO:0000269" key="14">
    <source>
    </source>
</evidence>
<evidence type="ECO:0000269" key="15">
    <source>
    </source>
</evidence>
<evidence type="ECO:0000269" key="16">
    <source>
    </source>
</evidence>
<evidence type="ECO:0000269" key="17">
    <source>
    </source>
</evidence>
<evidence type="ECO:0000303" key="18">
    <source>
    </source>
</evidence>
<evidence type="ECO:0000303" key="19">
    <source>
    </source>
</evidence>
<evidence type="ECO:0000305" key="20"/>
<evidence type="ECO:0000305" key="21">
    <source>
    </source>
</evidence>
<evidence type="ECO:0007744" key="22">
    <source>
        <dbReference type="PDB" id="7UMK"/>
    </source>
</evidence>
<evidence type="ECO:0007744" key="23">
    <source>
        <dbReference type="PDB" id="7UML"/>
    </source>
</evidence>
<evidence type="ECO:0007829" key="24">
    <source>
        <dbReference type="PDB" id="7UML"/>
    </source>
</evidence>
<protein>
    <recommendedName>
        <fullName evidence="19">Matrix protein</fullName>
        <shortName evidence="19">M protein</shortName>
    </recommendedName>
</protein>
<feature type="chain" id="PRO_0000222857" description="Matrix protein">
    <location>
        <begin position="1"/>
        <end position="229"/>
    </location>
</feature>
<feature type="region of interest" description="Disordered" evidence="2">
    <location>
        <begin position="1"/>
        <end position="23"/>
    </location>
</feature>
<feature type="short sequence motif" description="dynamin binding" evidence="10">
    <location>
        <begin position="2"/>
        <end position="4"/>
    </location>
</feature>
<feature type="short sequence motif" description="PPXY motif" evidence="7">
    <location>
        <begin position="24"/>
        <end position="27"/>
    </location>
</feature>
<feature type="short sequence motif" description="PTAP/PSAP motif" evidence="5">
    <location>
        <begin position="37"/>
        <end position="40"/>
    </location>
</feature>
<feature type="compositionally biased region" description="Low complexity" evidence="2">
    <location>
        <begin position="1"/>
        <end position="10"/>
    </location>
</feature>
<feature type="splice variant" id="VSP_025420" description="In isoform M3." evidence="20">
    <location>
        <begin position="1"/>
        <end position="50"/>
    </location>
</feature>
<feature type="splice variant" id="VSP_025421" description="In isoform M2." evidence="20">
    <location>
        <begin position="1"/>
        <end position="32"/>
    </location>
</feature>
<feature type="sequence variant" description="In strain: pVSV1(+)-GFP." evidence="14">
    <original>T</original>
    <variation>A</variation>
    <location>
        <position position="133"/>
    </location>
</feature>
<feature type="mutagenesis site" description="No effect on host NEDD4 or TSG101 binding." evidence="3">
    <original>L</original>
    <variation>A</variation>
    <location>
        <position position="4"/>
    </location>
</feature>
<feature type="mutagenesis site" description="No effect on mRNA nuclear export inhibition." evidence="3">
    <original>KKI</original>
    <variation>AAA</variation>
    <location>
        <begin position="5"/>
        <end position="7"/>
    </location>
</feature>
<feature type="mutagenesis site" description="Partial loss of host NEDD4 binding." evidence="11">
    <original>Y</original>
    <variation>A</variation>
    <location>
        <position position="27"/>
    </location>
</feature>
<feature type="mutagenesis site" description="No effect on mRNA nuclear export inhibition." evidence="3">
    <original>EED</original>
    <variation>AAA</variation>
    <location>
        <begin position="28"/>
        <end position="30"/>
    </location>
</feature>
<feature type="mutagenesis site" description="Partial loss of host TSG101 binding." evidence="11">
    <original>P</original>
    <variation>A</variation>
    <location>
        <position position="40"/>
    </location>
</feature>
<feature type="mutagenesis site" description="No effect on mRNA nuclear export inhibition." evidence="3">
    <original>DKS</original>
    <variation>AAA</variation>
    <location>
        <begin position="42"/>
        <end position="44"/>
    </location>
</feature>
<feature type="mutagenesis site" description="Complete loss of mRNA nuclear export inhibition. Loss of ability to inhibit host transcription." evidence="12 17">
    <original>M</original>
    <variation>R</variation>
    <location>
        <position position="51"/>
    </location>
</feature>
<feature type="mutagenesis site" description="Complete loss of mRNA nuclear export inhibition." evidence="3">
    <original>DTY</original>
    <variation>AAA</variation>
    <location>
        <begin position="52"/>
        <end position="54"/>
    </location>
</feature>
<feature type="mutagenesis site" description="No effect on mRNA nuclear export inhibition." evidence="3">
    <original>YEK</original>
    <variation>AAA</variation>
    <location>
        <begin position="61"/>
        <end position="63"/>
    </location>
</feature>
<feature type="mutagenesis site" description="Loss of mouse GTF2H5 binding. Loss of ability to inhibit host transcription." evidence="12">
    <original>I</original>
    <variation>A</variation>
    <location>
        <position position="96"/>
    </location>
</feature>
<feature type="mutagenesis site" description="No effect on virion budding. Increase viral-mRNA translation." evidence="8">
    <original>AVLA</original>
    <variation>DKQQ</variation>
    <location>
        <begin position="121"/>
        <end position="124"/>
    </location>
</feature>
<feature type="mutagenesis site" description="Loss of host NDUFAF4 binding." evidence="13">
    <original>EH</original>
    <variation>AA</variation>
    <location>
        <begin position="156"/>
        <end position="157"/>
    </location>
</feature>
<feature type="mutagenesis site" description="Loss of host NDUFAF4 binding. Loss of host GTF2H5 binding. Loss of ability to inhibit host transcription." evidence="12 13">
    <original>E</original>
    <variation>A</variation>
    <location>
        <position position="156"/>
    </location>
</feature>
<feature type="mutagenesis site" description="Loss of host GTF2H5 binding. Loss of ability to inhibit host transcription." evidence="12">
    <original>R</original>
    <variation>A</variation>
    <location>
        <position position="159"/>
    </location>
</feature>
<feature type="mutagenesis site" description="Loss of host GTF2H5 binding. Loss of ability to inhibit host transcription." evidence="12">
    <original>R</original>
    <variation>A</variation>
    <location>
        <position position="160"/>
    </location>
</feature>
<feature type="mutagenesis site" description="Loss of host NDUFAF4 binding." evidence="13">
    <original>DE</original>
    <variation>AA</variation>
    <location>
        <begin position="180"/>
        <end position="181"/>
    </location>
</feature>
<feature type="strand" evidence="24">
    <location>
        <begin position="45"/>
        <end position="48"/>
    </location>
</feature>
<feature type="strand" evidence="24">
    <location>
        <begin position="60"/>
        <end position="76"/>
    </location>
</feature>
<feature type="helix" evidence="24">
    <location>
        <begin position="82"/>
        <end position="88"/>
    </location>
</feature>
<feature type="turn" evidence="24">
    <location>
        <begin position="89"/>
        <end position="94"/>
    </location>
</feature>
<feature type="helix" evidence="24">
    <location>
        <begin position="102"/>
        <end position="114"/>
    </location>
</feature>
<feature type="helix" evidence="24">
    <location>
        <begin position="120"/>
        <end position="124"/>
    </location>
</feature>
<feature type="strand" evidence="24">
    <location>
        <begin position="130"/>
        <end position="143"/>
    </location>
</feature>
<feature type="strand" evidence="24">
    <location>
        <begin position="156"/>
        <end position="164"/>
    </location>
</feature>
<feature type="strand" evidence="24">
    <location>
        <begin position="167"/>
        <end position="179"/>
    </location>
</feature>
<feature type="helix" evidence="24">
    <location>
        <begin position="190"/>
        <end position="192"/>
    </location>
</feature>
<feature type="strand" evidence="24">
    <location>
        <begin position="195"/>
        <end position="197"/>
    </location>
</feature>
<feature type="helix" evidence="24">
    <location>
        <begin position="202"/>
        <end position="207"/>
    </location>
</feature>
<feature type="strand" evidence="24">
    <location>
        <begin position="211"/>
        <end position="213"/>
    </location>
</feature>
<feature type="strand" evidence="24">
    <location>
        <begin position="221"/>
        <end position="224"/>
    </location>
</feature>
<gene>
    <name type="primary">M</name>
</gene>
<organism>
    <name type="scientific">Vesicular stomatitis Indiana virus (strain San Juan)</name>
    <name type="common">VSIV</name>
    <dbReference type="NCBI Taxonomy" id="11285"/>
    <lineage>
        <taxon>Viruses</taxon>
        <taxon>Riboviria</taxon>
        <taxon>Orthornavirae</taxon>
        <taxon>Negarnaviricota</taxon>
        <taxon>Haploviricotina</taxon>
        <taxon>Monjiviricetes</taxon>
        <taxon>Mononegavirales</taxon>
        <taxon>Rhabdoviridae</taxon>
        <taxon>Alpharhabdovirinae</taxon>
        <taxon>Vesiculovirus</taxon>
        <taxon>Vesiculovirus indiana</taxon>
    </lineage>
</organism>
<keyword id="KW-0002">3D-structure</keyword>
<keyword id="KW-0024">Alternative initiation</keyword>
<keyword id="KW-0053">Apoptosis</keyword>
<keyword id="KW-1262">Eukaryotic host gene expression shutoff by virus</keyword>
<keyword id="KW-1035">Host cytoplasm</keyword>
<keyword id="KW-1190">Host gene expression shutoff by virus</keyword>
<keyword id="KW-1043">Host membrane</keyword>
<keyword id="KW-1192">Host mRNA suppression by virus</keyword>
<keyword id="KW-1048">Host nucleus</keyword>
<keyword id="KW-0945">Host-virus interaction</keyword>
<keyword id="KW-1099">Inhibition of host mRNA nuclear export by virus</keyword>
<keyword id="KW-0472">Membrane</keyword>
<keyword id="KW-0597">Phosphoprotein</keyword>
<keyword id="KW-1185">Reference proteome</keyword>
<keyword id="KW-1198">Viral budding</keyword>
<keyword id="KW-1187">Viral budding via the host ESCRT complexes</keyword>
<keyword id="KW-0468">Viral matrix protein</keyword>
<keyword id="KW-1188">Viral release from host cell</keyword>
<keyword id="KW-0946">Virion</keyword>
<name>MATRX_VSIVA</name>
<proteinExistence type="evidence at protein level"/>
<comment type="function">
    <text evidence="5 6 7 11 12 14 15 16 21">Forms a double layer around the helical nucleocapsid, the inner matrix layer binding to the N helix and the outer matrix layer binding to the envelope glycoprotein (PubMed:35476516, PubMed:35970826). Plays a major role in assembly and budding of virion, by recruiting cellular partners of the ESCRT complexes that play a key role in releasing the budding particle from the host membrane (Probable) (PubMed:15220457, PubMed:16188963, PubMed:22190013). Condensates the ribonucleocapsid core during virus assembly (PubMed:35970826). Inhibits the host mRNA nuclear export thereby inducing the shut off of cellular transcription and preventing the interferon signaling and the establishment of antiviral state in infected cells (PubMed:15629720, PubMed:33849972). This shutoff presumably inhibits interferon signaling and thus establishment of antiviral state in virus infected cells (PubMed:33849972). Induces cell-rounding, cytoskeleton disorganization and apoptosis in infected cell (PubMed:15629720). Inhibits host transcription, possibly through interaction with host DNA repair factor IIH/TFIIH GTF2H5 subunit (PubMed:28888655).</text>
</comment>
<comment type="subunit">
    <text evidence="1 3 6 10 11 12 13 14 15 16">Homomultimer (PubMed:35476516, PubMed:35970826). Interacts with viral nucleocapsid; this interaction contributes to the virion assembly (PubMed:35476516, PubMed:35970826). Interacts with the viral envelope glycoprotein; this interaction contributes to the virion assembly (By similarity). Interacts with host RAE1-NUP98 complex (PubMed:11106761, PubMed:15629720, PubMed:33849972). Interacts with host NEDD4 and TSG101 (PubMed:22190013). Interacts with host dynamin (PubMed:20943988). Interacts with host NDUFAF4; the interaction inhibits viral propagation and is independent of interferon activation (PubMed:33635491). Interacts with host GTF2H5; the interaction may inhibit host transcription (PubMed:28888655).</text>
</comment>
<comment type="interaction">
    <interactant intactId="EBI-7228115">
        <id>P03519</id>
    </interactant>
    <interactant intactId="EBI-1564678">
        <id>Q96J02</id>
        <label>ITCH</label>
    </interactant>
    <organismsDiffer>true</organismsDiffer>
    <experiments>2</experiments>
</comment>
<comment type="subcellular location">
    <subcellularLocation>
        <location evidence="15">Virion</location>
    </subcellularLocation>
    <subcellularLocation>
        <location>Host endomembrane system</location>
        <topology evidence="9">Peripheral membrane protein</topology>
    </subcellularLocation>
    <subcellularLocation>
        <location>Host nucleus membrane</location>
        <topology>Peripheral membrane protein</topology>
    </subcellularLocation>
    <subcellularLocation>
        <location evidence="12">Host nucleus</location>
    </subcellularLocation>
    <subcellularLocation>
        <location evidence="9 12">Host cytoplasm</location>
    </subcellularLocation>
    <text evidence="15">In the virion, forms a double layer around the helical nucleocapsid, the inner matrix layer binding to the N helix and the outer matrix layer binding to the envelope glycoprotein (PubMed:35476516). About 2480 copies of M are present in the virion (PubMed:35476516).</text>
</comment>
<comment type="alternative products">
    <event type="alternative initiation"/>
    <isoform>
        <id>P03519-1</id>
        <name>M</name>
        <sequence type="displayed"/>
    </isoform>
    <isoform>
        <id>P03519-2</id>
        <name evidence="18">M2</name>
        <sequence type="described" ref="VSP_025421"/>
    </isoform>
    <isoform>
        <id>P03519-3</id>
        <name evidence="18">M3</name>
        <sequence type="described" ref="VSP_025420"/>
    </isoform>
</comment>
<comment type="domain">
    <text evidence="5 7">Late-budding domains (L domains) are short sequence motifs essential for viral particle budding (PubMed:15220457, PubMed:16188963). They recruit proteins of the host ESCRT machinery (Endosomal Sorting Complex Required for Transport) or ESCRT-associated proteins (PubMed:15220457, PubMed:16188963). M contains two overlapping L domains: a PPXY motif which interacts with the WW domain 3 of NEDD4 and a PTAP/PSAP motif, which interacts with the UEV domain of TSG101 (PubMed:15220457, PubMed:16188963).</text>
</comment>
<comment type="PTM">
    <text evidence="4">Phosphorylated by host.</text>
</comment>
<comment type="biotechnology">
    <text evidence="20">VSV is used as an oncolytic agent for cancer therapy, because of his wide host range, rapid replication and mild pathogenicity in humans. VSV used are mutated at M51R in their matrix protein. These mutated viruses cannot successfully infect normal cells, being unable to counteract the antiviral state induced by interferon-alpha in normal cells. Cancer cells are impeded with responsiveness to interferon, and then can be successfully infected and lysed by the virus.</text>
</comment>
<comment type="similarity">
    <text evidence="20">Belongs to the vesiculoviruses matrix protein family.</text>
</comment>
<organismHost>
    <name type="scientific">Aedes</name>
    <dbReference type="NCBI Taxonomy" id="7158"/>
</organismHost>
<organismHost>
    <name type="scientific">Bos taurus</name>
    <name type="common">Bovine</name>
    <dbReference type="NCBI Taxonomy" id="9913"/>
</organismHost>
<organismHost>
    <name type="scientific">Culicoides</name>
    <dbReference type="NCBI Taxonomy" id="58271"/>
</organismHost>
<organismHost>
    <name type="scientific">Equus asinus</name>
    <name type="common">Donkey</name>
    <name type="synonym">Equus africanus asinus</name>
    <dbReference type="NCBI Taxonomy" id="9793"/>
</organismHost>
<organismHost>
    <name type="scientific">Equus caballus</name>
    <name type="common">Horse</name>
    <dbReference type="NCBI Taxonomy" id="9796"/>
</organismHost>
<organismHost>
    <name type="scientific">Homo sapiens</name>
    <name type="common">Human</name>
    <dbReference type="NCBI Taxonomy" id="9606"/>
</organismHost>
<organismHost>
    <name type="scientific">Lutzomyia</name>
    <dbReference type="NCBI Taxonomy" id="252607"/>
</organismHost>
<organismHost>
    <name type="scientific">Musca domestica</name>
    <name type="common">House fly</name>
    <dbReference type="NCBI Taxonomy" id="7370"/>
</organismHost>
<organismHost>
    <name type="scientific">Simuliidae</name>
    <name type="common">black flies</name>
    <dbReference type="NCBI Taxonomy" id="7190"/>
</organismHost>
<organismHost>
    <name type="scientific">Sus scrofa</name>
    <name type="common">Pig</name>
    <dbReference type="NCBI Taxonomy" id="9823"/>
</organismHost>
<sequence>MSSLKKILGLKGKGKKSKKLGIAPPPYEEDTSMEYAPSAPIDKSYFGVDEMDTYDPNQLRYEKFFFTVKMTVRSNRPFRTYSDVAAAVSHWDHMYIGMAGKRPFYKILAFLGSSNLKATPAVLADQGQPEYHTHCEGRAYLPHRMGKTPPMLNVPEHFRRPFNIGLYKGTIELTMTIYDDESLEAAPMIWDHFNSSKFSDFREKALMFGLIVEKKASGAWVLDSISHFK</sequence>
<dbReference type="EMBL" id="J02428">
    <property type="protein sequence ID" value="AAA48369.1"/>
    <property type="molecule type" value="Genomic_RNA"/>
</dbReference>
<dbReference type="RefSeq" id="NP_041714.1">
    <property type="nucleotide sequence ID" value="NC_001560.1"/>
</dbReference>
<dbReference type="PDB" id="7UMK">
    <property type="method" value="EM"/>
    <property type="resolution" value="4.10 A"/>
    <property type="chains" value="B/C=1-229"/>
</dbReference>
<dbReference type="PDB" id="7UML">
    <property type="method" value="EM"/>
    <property type="resolution" value="3.50 A"/>
    <property type="chains" value="B/C/F=1-229"/>
</dbReference>
<dbReference type="PDBsum" id="7UMK"/>
<dbReference type="PDBsum" id="7UML"/>
<dbReference type="EMDB" id="EMD-26602"/>
<dbReference type="EMDB" id="EMD-26603"/>
<dbReference type="SMR" id="P03519"/>
<dbReference type="ELM" id="P03519"/>
<dbReference type="IntAct" id="P03519">
    <property type="interactions" value="7"/>
</dbReference>
<dbReference type="MINT" id="P03519"/>
<dbReference type="TCDB" id="9.A.73.2.1">
    <property type="family name" value="the virus matrix protein (vmp) family"/>
</dbReference>
<dbReference type="DNASU" id="1489833"/>
<dbReference type="KEGG" id="vg:1489833"/>
<dbReference type="Proteomes" id="UP000002327">
    <property type="component" value="Segment"/>
</dbReference>
<dbReference type="GO" id="GO:0030430">
    <property type="term" value="C:host cell cytoplasm"/>
    <property type="evidence" value="ECO:0007669"/>
    <property type="project" value="UniProtKB-SubCell"/>
</dbReference>
<dbReference type="GO" id="GO:0044200">
    <property type="term" value="C:host cell nuclear membrane"/>
    <property type="evidence" value="ECO:0007669"/>
    <property type="project" value="UniProtKB-SubCell"/>
</dbReference>
<dbReference type="GO" id="GO:0016020">
    <property type="term" value="C:membrane"/>
    <property type="evidence" value="ECO:0007669"/>
    <property type="project" value="UniProtKB-KW"/>
</dbReference>
<dbReference type="GO" id="GO:0019031">
    <property type="term" value="C:viral envelope"/>
    <property type="evidence" value="ECO:0007669"/>
    <property type="project" value="InterPro"/>
</dbReference>
<dbReference type="GO" id="GO:0039660">
    <property type="term" value="F:structural constituent of virion"/>
    <property type="evidence" value="ECO:0007669"/>
    <property type="project" value="UniProtKB-KW"/>
</dbReference>
<dbReference type="GO" id="GO:0016310">
    <property type="term" value="P:phosphorylation"/>
    <property type="evidence" value="ECO:0000314"/>
    <property type="project" value="UniProtKB"/>
</dbReference>
<dbReference type="GO" id="GO:0141028">
    <property type="term" value="P:symbiont-mediated perturbation of host microtubule cytoskeleton"/>
    <property type="evidence" value="ECO:0000269"/>
    <property type="project" value="SigSci"/>
</dbReference>
<dbReference type="GO" id="GO:0039522">
    <property type="term" value="P:symbiont-mediated suppression of host mRNA export from nucleus"/>
    <property type="evidence" value="ECO:0000314"/>
    <property type="project" value="UniProtKB"/>
</dbReference>
<dbReference type="GO" id="GO:0039602">
    <property type="term" value="P:symbiont-mediated suppression of host transcription initiation from RNA polymerase II promoter"/>
    <property type="evidence" value="ECO:0000315"/>
    <property type="project" value="UniProtKB"/>
</dbReference>
<dbReference type="GO" id="GO:0039702">
    <property type="term" value="P:viral budding via host ESCRT complex"/>
    <property type="evidence" value="ECO:0000314"/>
    <property type="project" value="UniProtKB"/>
</dbReference>
<dbReference type="FunFam" id="3.10.460.10:FF:000001">
    <property type="entry name" value="Matrix protein"/>
    <property type="match status" value="1"/>
</dbReference>
<dbReference type="Gene3D" id="3.10.460.10">
    <property type="entry name" value="VSV matrix protein"/>
    <property type="match status" value="1"/>
</dbReference>
<dbReference type="InterPro" id="IPR009397">
    <property type="entry name" value="Vesiculo_matrix"/>
</dbReference>
<dbReference type="InterPro" id="IPR036711">
    <property type="entry name" value="VSV_matrix_sf"/>
</dbReference>
<dbReference type="Pfam" id="PF06326">
    <property type="entry name" value="Vesiculo_matrix"/>
    <property type="match status" value="1"/>
</dbReference>
<dbReference type="SUPFAM" id="SSF75404">
    <property type="entry name" value="VSV matrix protein"/>
    <property type="match status" value="1"/>
</dbReference>